<keyword id="KW-0378">Hydrolase</keyword>
<keyword id="KW-0408">Iron</keyword>
<keyword id="KW-0479">Metal-binding</keyword>
<keyword id="KW-1185">Reference proteome</keyword>
<keyword id="KW-0862">Zinc</keyword>
<protein>
    <recommendedName>
        <fullName evidence="2">2-amino-5-formylamino-6-ribosylaminopyrimidin-4(3H)-one 5'-monophosphate deformylase</fullName>
        <shortName evidence="2">FAPy deformylase</shortName>
        <ecNumber evidence="2">3.5.1.102</ecNumber>
    </recommendedName>
    <alternativeName>
        <fullName evidence="2">Formamide hydrolase</fullName>
    </alternativeName>
</protein>
<gene>
    <name evidence="2" type="primary">arfB</name>
    <name type="ordered locus">Mfer_1218</name>
</gene>
<feature type="chain" id="PRO_0000406933" description="2-amino-5-formylamino-6-ribosylaminopyrimidin-4(3H)-one 5'-monophosphate deformylase">
    <location>
        <begin position="1"/>
        <end position="247"/>
    </location>
</feature>
<feature type="binding site" evidence="2">
    <location>
        <position position="41"/>
    </location>
    <ligand>
        <name>Fe cation</name>
        <dbReference type="ChEBI" id="CHEBI:24875"/>
        <label>1</label>
    </ligand>
</feature>
<feature type="binding site" evidence="2">
    <location>
        <position position="43"/>
    </location>
    <ligand>
        <name>Fe cation</name>
        <dbReference type="ChEBI" id="CHEBI:24875"/>
        <label>2</label>
    </ligand>
</feature>
<feature type="binding site" evidence="2">
    <location>
        <position position="52"/>
    </location>
    <ligand>
        <name>Fe cation</name>
        <dbReference type="ChEBI" id="CHEBI:24875"/>
        <label>1</label>
    </ligand>
</feature>
<feature type="binding site" evidence="2">
    <location>
        <position position="52"/>
    </location>
    <ligand>
        <name>Fe cation</name>
        <dbReference type="ChEBI" id="CHEBI:24875"/>
        <label>2</label>
    </ligand>
</feature>
<feature type="binding site" evidence="2">
    <location>
        <position position="121"/>
    </location>
    <ligand>
        <name>Fe cation</name>
        <dbReference type="ChEBI" id="CHEBI:24875"/>
        <label>1</label>
    </ligand>
</feature>
<proteinExistence type="inferred from homology"/>
<reference key="1">
    <citation type="journal article" date="2010" name="Stand. Genomic Sci.">
        <title>Complete genome sequence of Methanothermus fervidus type strain (V24S).</title>
        <authorList>
            <person name="Anderson I."/>
            <person name="Djao O.D."/>
            <person name="Misra M."/>
            <person name="Chertkov O."/>
            <person name="Nolan M."/>
            <person name="Lucas S."/>
            <person name="Lapidus A."/>
            <person name="Del Rio T.G."/>
            <person name="Tice H."/>
            <person name="Cheng J.F."/>
            <person name="Tapia R."/>
            <person name="Han C."/>
            <person name="Goodwin L."/>
            <person name="Pitluck S."/>
            <person name="Liolios K."/>
            <person name="Ivanova N."/>
            <person name="Mavromatis K."/>
            <person name="Mikhailova N."/>
            <person name="Pati A."/>
            <person name="Brambilla E."/>
            <person name="Chen A."/>
            <person name="Palaniappan K."/>
            <person name="Land M."/>
            <person name="Hauser L."/>
            <person name="Chang Y.J."/>
            <person name="Jeffries C.D."/>
            <person name="Sikorski J."/>
            <person name="Spring S."/>
            <person name="Rohde M."/>
            <person name="Eichinger K."/>
            <person name="Huber H."/>
            <person name="Wirth R."/>
            <person name="Goker M."/>
            <person name="Detter J.C."/>
            <person name="Woyke T."/>
            <person name="Bristow J."/>
            <person name="Eisen J.A."/>
            <person name="Markowitz V."/>
            <person name="Hugenholtz P."/>
            <person name="Klenk H.P."/>
            <person name="Kyrpides N.C."/>
        </authorList>
    </citation>
    <scope>NUCLEOTIDE SEQUENCE [LARGE SCALE GENOMIC DNA]</scope>
    <source>
        <strain>ATCC 43054 / DSM 2088 / JCM 10308 / V24 S</strain>
    </source>
</reference>
<evidence type="ECO:0000250" key="1"/>
<evidence type="ECO:0000255" key="2">
    <source>
        <dbReference type="HAMAP-Rule" id="MF_02116"/>
    </source>
</evidence>
<comment type="function">
    <text evidence="2">Catalyzes the hydrolysis of the formamide of 2-amino-5-formylamino-6-ribosylamino-4(3H)-pyrimidinone 5'-monophosphate (FAPy) to form 2,5-diamino-6-ribosylamino-4(3H)-pyrimidinone 5'-phosphate (APy).</text>
</comment>
<comment type="catalytic activity">
    <reaction evidence="2">
        <text>2-amino-5-formylamino-6-(5-phospho-D-ribosylamino)pyrimidin-4(3H)-one + H2O = 2,5-diamino-6-(1-D-ribosylamino)pyrimidin-4(3H)-one 5'-phosphate + formate + H(+)</text>
        <dbReference type="Rhea" id="RHEA:27282"/>
        <dbReference type="ChEBI" id="CHEBI:15377"/>
        <dbReference type="ChEBI" id="CHEBI:15378"/>
        <dbReference type="ChEBI" id="CHEBI:15740"/>
        <dbReference type="ChEBI" id="CHEBI:57258"/>
        <dbReference type="ChEBI" id="CHEBI:59545"/>
        <dbReference type="EC" id="3.5.1.102"/>
    </reaction>
</comment>
<comment type="cofactor">
    <cofactor evidence="1">
        <name>Fe(2+)</name>
        <dbReference type="ChEBI" id="CHEBI:29033"/>
    </cofactor>
    <text evidence="1">Requires one Fe(2+) ion for activity.</text>
</comment>
<comment type="cofactor">
    <cofactor evidence="1">
        <name>Fe(2+)</name>
        <dbReference type="ChEBI" id="CHEBI:29033"/>
    </cofactor>
    <cofactor evidence="1">
        <name>Zn(2+)</name>
        <dbReference type="ChEBI" id="CHEBI:29105"/>
    </cofactor>
    <text evidence="1">Requires an additional second metal ion that could be Fe(2+) or Zn(2+).</text>
</comment>
<comment type="pathway">
    <text evidence="2">Cofactor biosynthesis; coenzyme F420 biosynthesis.</text>
</comment>
<comment type="pathway">
    <text evidence="2">Cofactor biosynthesis; riboflavin biosynthesis.</text>
</comment>
<comment type="subunit">
    <text evidence="2">Homodimer.</text>
</comment>
<comment type="similarity">
    <text evidence="2">Belongs to the creatininase superfamily. FAPy deformylase family.</text>
</comment>
<name>ARFB_METFV</name>
<organism>
    <name type="scientific">Methanothermus fervidus (strain ATCC 43054 / DSM 2088 / JCM 10308 / V24 S)</name>
    <dbReference type="NCBI Taxonomy" id="523846"/>
    <lineage>
        <taxon>Archaea</taxon>
        <taxon>Methanobacteriati</taxon>
        <taxon>Methanobacteriota</taxon>
        <taxon>Methanomada group</taxon>
        <taxon>Methanobacteria</taxon>
        <taxon>Methanobacteriales</taxon>
        <taxon>Methanothermaceae</taxon>
        <taxon>Methanothermus</taxon>
    </lineage>
</organism>
<sequence>MESRFIKAERDTKLKLNYDAGNIISPKVHSVGVLALGSYLENHGPVLPIDTDIKIASYLALNASIKTGAKFIGTVYPATEYPYVKHGIHVSVKDLIENIVSIMKLANKYIGIDKSVIVNAHGGNLPLKKHINVIERETGMKIVMNNKIVEIEGPHAGSGETSLGYVIGIADVERMNEIDFKKYPEIGMVGLKSARKLNKKIDEGAKIVEKEGVKINPKLGRKLLNIALNDIINDIKHLIRMDKNETK</sequence>
<accession>E3GWT5</accession>
<dbReference type="EC" id="3.5.1.102" evidence="2"/>
<dbReference type="EMBL" id="CP002278">
    <property type="protein sequence ID" value="ADP78004.1"/>
    <property type="molecule type" value="Genomic_DNA"/>
</dbReference>
<dbReference type="SMR" id="E3GWT5"/>
<dbReference type="STRING" id="523846.Mfer_1218"/>
<dbReference type="KEGG" id="mfv:Mfer_1218"/>
<dbReference type="HOGENOM" id="CLU_1192640_0_0_2"/>
<dbReference type="OrthoDB" id="46121at2157"/>
<dbReference type="UniPathway" id="UPA00071"/>
<dbReference type="UniPathway" id="UPA00275"/>
<dbReference type="Proteomes" id="UP000002315">
    <property type="component" value="Chromosome"/>
</dbReference>
<dbReference type="GO" id="GO:0043729">
    <property type="term" value="F:2-amino-5-formylamino-6-(5-phosphoribosylamino)pyrimidin-4(3H)-one formate-lyase activity"/>
    <property type="evidence" value="ECO:0007669"/>
    <property type="project" value="UniProtKB-EC"/>
</dbReference>
<dbReference type="GO" id="GO:0008198">
    <property type="term" value="F:ferrous iron binding"/>
    <property type="evidence" value="ECO:0007669"/>
    <property type="project" value="UniProtKB-UniRule"/>
</dbReference>
<dbReference type="GO" id="GO:0052645">
    <property type="term" value="P:F420-0 metabolic process"/>
    <property type="evidence" value="ECO:0007669"/>
    <property type="project" value="UniProtKB-UniRule"/>
</dbReference>
<dbReference type="GO" id="GO:0009231">
    <property type="term" value="P:riboflavin biosynthetic process"/>
    <property type="evidence" value="ECO:0007669"/>
    <property type="project" value="UniProtKB-UniRule"/>
</dbReference>
<dbReference type="Gene3D" id="3.40.50.10310">
    <property type="entry name" value="Creatininase"/>
    <property type="match status" value="1"/>
</dbReference>
<dbReference type="HAMAP" id="MF_02116">
    <property type="entry name" value="FAPy_deform"/>
    <property type="match status" value="1"/>
</dbReference>
<dbReference type="InterPro" id="IPR024087">
    <property type="entry name" value="Creatininase-like_sf"/>
</dbReference>
<dbReference type="InterPro" id="IPR003785">
    <property type="entry name" value="Creatininase/forma_Hydrolase"/>
</dbReference>
<dbReference type="InterPro" id="IPR024901">
    <property type="entry name" value="FAPy_deformylase"/>
</dbReference>
<dbReference type="NCBIfam" id="NF033501">
    <property type="entry name" value="ArfB_arch_rifla"/>
    <property type="match status" value="1"/>
</dbReference>
<dbReference type="PANTHER" id="PTHR35005:SF1">
    <property type="entry name" value="2-AMINO-5-FORMYLAMINO-6-RIBOSYLAMINOPYRIMIDIN-4(3H)-ONE 5'-MONOPHOSPHATE DEFORMYLASE"/>
    <property type="match status" value="1"/>
</dbReference>
<dbReference type="PANTHER" id="PTHR35005">
    <property type="entry name" value="3-DEHYDRO-SCYLLO-INOSOSE HYDROLASE"/>
    <property type="match status" value="1"/>
</dbReference>
<dbReference type="Pfam" id="PF02633">
    <property type="entry name" value="Creatininase"/>
    <property type="match status" value="1"/>
</dbReference>
<dbReference type="SUPFAM" id="SSF102215">
    <property type="entry name" value="Creatininase"/>
    <property type="match status" value="1"/>
</dbReference>